<reference key="1">
    <citation type="journal article" date="2005" name="Nat. Genet.">
        <title>The complete genome sequence of Francisella tularensis, the causative agent of tularemia.</title>
        <authorList>
            <person name="Larsson P."/>
            <person name="Oyston P.C.F."/>
            <person name="Chain P."/>
            <person name="Chu M.C."/>
            <person name="Duffield M."/>
            <person name="Fuxelius H.-H."/>
            <person name="Garcia E."/>
            <person name="Haelltorp G."/>
            <person name="Johansson D."/>
            <person name="Isherwood K.E."/>
            <person name="Karp P.D."/>
            <person name="Larsson E."/>
            <person name="Liu Y."/>
            <person name="Michell S."/>
            <person name="Prior J."/>
            <person name="Prior R."/>
            <person name="Malfatti S."/>
            <person name="Sjoestedt A."/>
            <person name="Svensson K."/>
            <person name="Thompson N."/>
            <person name="Vergez L."/>
            <person name="Wagg J.K."/>
            <person name="Wren B.W."/>
            <person name="Lindler L.E."/>
            <person name="Andersson S.G.E."/>
            <person name="Forsman M."/>
            <person name="Titball R.W."/>
        </authorList>
    </citation>
    <scope>NUCLEOTIDE SEQUENCE [LARGE SCALE GENOMIC DNA]</scope>
    <source>
        <strain>SCHU S4 / Schu 4</strain>
    </source>
</reference>
<keyword id="KW-0012">Acyltransferase</keyword>
<keyword id="KW-0963">Cytoplasm</keyword>
<keyword id="KW-0408">Iron</keyword>
<keyword id="KW-0479">Metal-binding</keyword>
<keyword id="KW-1185">Reference proteome</keyword>
<keyword id="KW-0808">Transferase</keyword>
<keyword id="KW-0819">tRNA processing</keyword>
<evidence type="ECO:0000255" key="1">
    <source>
        <dbReference type="HAMAP-Rule" id="MF_01445"/>
    </source>
</evidence>
<name>TSAD_FRATT</name>
<proteinExistence type="inferred from homology"/>
<gene>
    <name evidence="1" type="primary">tsaD</name>
    <name type="synonym">gcp</name>
    <name type="ordered locus">FTT_0147</name>
</gene>
<organism>
    <name type="scientific">Francisella tularensis subsp. tularensis (strain SCHU S4 / Schu 4)</name>
    <dbReference type="NCBI Taxonomy" id="177416"/>
    <lineage>
        <taxon>Bacteria</taxon>
        <taxon>Pseudomonadati</taxon>
        <taxon>Pseudomonadota</taxon>
        <taxon>Gammaproteobacteria</taxon>
        <taxon>Thiotrichales</taxon>
        <taxon>Francisellaceae</taxon>
        <taxon>Francisella</taxon>
    </lineage>
</organism>
<sequence length="336" mass="36859">MIVLGIESSCDETGLAIYDYSKKKLIADELYSQVKLHKKYGGVVPELASREHIAKLNLLAKKIFKETGLSFEDIDCIAYTAMPGLVGALMVGATFAKTLGLIHNIDTIAVHHLEGHLLSPLLDHNSNIEYPFVALLVSGGHTQLFEVKEFGEYSLLGESIDDAAGEAFDKTTKLLGMGYPGGVEVANLADQATDKSKYILPRPMKNKPNLDFSFSGLKTAVLNTWYDEQDQSLENKANLCYAFQDAAIDVLVSKCAKALQKTKNTRLVISGGVSANKLLRHQLDLLAKNRGYQIFFPPMKYCTDNGAMIALAGAYRYVNGFKDSNLEINVKARSPL</sequence>
<dbReference type="EC" id="2.3.1.234" evidence="1"/>
<dbReference type="EMBL" id="AJ749949">
    <property type="protein sequence ID" value="CAG44780.1"/>
    <property type="molecule type" value="Genomic_DNA"/>
</dbReference>
<dbReference type="RefSeq" id="WP_003019913.1">
    <property type="nucleotide sequence ID" value="NC_006570.2"/>
</dbReference>
<dbReference type="RefSeq" id="YP_169213.1">
    <property type="nucleotide sequence ID" value="NC_006570.2"/>
</dbReference>
<dbReference type="SMR" id="Q5NIC9"/>
<dbReference type="STRING" id="177416.FTT_0147"/>
<dbReference type="DNASU" id="3192378"/>
<dbReference type="EnsemblBacteria" id="CAG44780">
    <property type="protein sequence ID" value="CAG44780"/>
    <property type="gene ID" value="FTT_0147"/>
</dbReference>
<dbReference type="KEGG" id="ftu:FTT_0147"/>
<dbReference type="eggNOG" id="COG0533">
    <property type="taxonomic scope" value="Bacteria"/>
</dbReference>
<dbReference type="OrthoDB" id="9806197at2"/>
<dbReference type="Proteomes" id="UP000001174">
    <property type="component" value="Chromosome"/>
</dbReference>
<dbReference type="GO" id="GO:0005737">
    <property type="term" value="C:cytoplasm"/>
    <property type="evidence" value="ECO:0007669"/>
    <property type="project" value="UniProtKB-SubCell"/>
</dbReference>
<dbReference type="GO" id="GO:0005506">
    <property type="term" value="F:iron ion binding"/>
    <property type="evidence" value="ECO:0007669"/>
    <property type="project" value="UniProtKB-UniRule"/>
</dbReference>
<dbReference type="GO" id="GO:0061711">
    <property type="term" value="F:N(6)-L-threonylcarbamoyladenine synthase activity"/>
    <property type="evidence" value="ECO:0007669"/>
    <property type="project" value="UniProtKB-EC"/>
</dbReference>
<dbReference type="GO" id="GO:0002949">
    <property type="term" value="P:tRNA threonylcarbamoyladenosine modification"/>
    <property type="evidence" value="ECO:0007669"/>
    <property type="project" value="UniProtKB-UniRule"/>
</dbReference>
<dbReference type="CDD" id="cd24133">
    <property type="entry name" value="ASKHA_NBD_TsaD_bac"/>
    <property type="match status" value="1"/>
</dbReference>
<dbReference type="FunFam" id="3.30.420.40:FF:000012">
    <property type="entry name" value="tRNA N6-adenosine threonylcarbamoyltransferase"/>
    <property type="match status" value="1"/>
</dbReference>
<dbReference type="FunFam" id="3.30.420.40:FF:000040">
    <property type="entry name" value="tRNA N6-adenosine threonylcarbamoyltransferase"/>
    <property type="match status" value="1"/>
</dbReference>
<dbReference type="Gene3D" id="3.30.420.40">
    <property type="match status" value="2"/>
</dbReference>
<dbReference type="HAMAP" id="MF_01445">
    <property type="entry name" value="TsaD"/>
    <property type="match status" value="1"/>
</dbReference>
<dbReference type="InterPro" id="IPR043129">
    <property type="entry name" value="ATPase_NBD"/>
</dbReference>
<dbReference type="InterPro" id="IPR000905">
    <property type="entry name" value="Gcp-like_dom"/>
</dbReference>
<dbReference type="InterPro" id="IPR017861">
    <property type="entry name" value="KAE1/TsaD"/>
</dbReference>
<dbReference type="InterPro" id="IPR022450">
    <property type="entry name" value="TsaD"/>
</dbReference>
<dbReference type="NCBIfam" id="TIGR00329">
    <property type="entry name" value="gcp_kae1"/>
    <property type="match status" value="1"/>
</dbReference>
<dbReference type="NCBIfam" id="TIGR03723">
    <property type="entry name" value="T6A_TsaD_YgjD"/>
    <property type="match status" value="1"/>
</dbReference>
<dbReference type="PANTHER" id="PTHR11735">
    <property type="entry name" value="TRNA N6-ADENOSINE THREONYLCARBAMOYLTRANSFERASE"/>
    <property type="match status" value="1"/>
</dbReference>
<dbReference type="PANTHER" id="PTHR11735:SF6">
    <property type="entry name" value="TRNA N6-ADENOSINE THREONYLCARBAMOYLTRANSFERASE, MITOCHONDRIAL"/>
    <property type="match status" value="1"/>
</dbReference>
<dbReference type="Pfam" id="PF00814">
    <property type="entry name" value="TsaD"/>
    <property type="match status" value="1"/>
</dbReference>
<dbReference type="PRINTS" id="PR00789">
    <property type="entry name" value="OSIALOPTASE"/>
</dbReference>
<dbReference type="SUPFAM" id="SSF53067">
    <property type="entry name" value="Actin-like ATPase domain"/>
    <property type="match status" value="2"/>
</dbReference>
<protein>
    <recommendedName>
        <fullName evidence="1">tRNA N6-adenosine threonylcarbamoyltransferase</fullName>
        <ecNumber evidence="1">2.3.1.234</ecNumber>
    </recommendedName>
    <alternativeName>
        <fullName evidence="1">N6-L-threonylcarbamoyladenine synthase</fullName>
        <shortName evidence="1">t(6)A synthase</shortName>
    </alternativeName>
    <alternativeName>
        <fullName evidence="1">t(6)A37 threonylcarbamoyladenosine biosynthesis protein TsaD</fullName>
    </alternativeName>
    <alternativeName>
        <fullName evidence="1">tRNA threonylcarbamoyladenosine biosynthesis protein TsaD</fullName>
    </alternativeName>
</protein>
<accession>Q5NIC9</accession>
<feature type="chain" id="PRO_0000303366" description="tRNA N6-adenosine threonylcarbamoyltransferase">
    <location>
        <begin position="1"/>
        <end position="336"/>
    </location>
</feature>
<feature type="binding site" evidence="1">
    <location>
        <position position="112"/>
    </location>
    <ligand>
        <name>Fe cation</name>
        <dbReference type="ChEBI" id="CHEBI:24875"/>
    </ligand>
</feature>
<feature type="binding site" evidence="1">
    <location>
        <position position="116"/>
    </location>
    <ligand>
        <name>Fe cation</name>
        <dbReference type="ChEBI" id="CHEBI:24875"/>
    </ligand>
</feature>
<feature type="binding site" evidence="1">
    <location>
        <begin position="136"/>
        <end position="140"/>
    </location>
    <ligand>
        <name>substrate</name>
    </ligand>
</feature>
<feature type="binding site" evidence="1">
    <location>
        <position position="169"/>
    </location>
    <ligand>
        <name>substrate</name>
    </ligand>
</feature>
<feature type="binding site" evidence="1">
    <location>
        <position position="182"/>
    </location>
    <ligand>
        <name>substrate</name>
    </ligand>
</feature>
<feature type="binding site" evidence="1">
    <location>
        <position position="276"/>
    </location>
    <ligand>
        <name>substrate</name>
    </ligand>
</feature>
<feature type="binding site" evidence="1">
    <location>
        <position position="304"/>
    </location>
    <ligand>
        <name>Fe cation</name>
        <dbReference type="ChEBI" id="CHEBI:24875"/>
    </ligand>
</feature>
<comment type="function">
    <text evidence="1">Required for the formation of a threonylcarbamoyl group on adenosine at position 37 (t(6)A37) in tRNAs that read codons beginning with adenine. Is involved in the transfer of the threonylcarbamoyl moiety of threonylcarbamoyl-AMP (TC-AMP) to the N6 group of A37, together with TsaE and TsaB. TsaD likely plays a direct catalytic role in this reaction.</text>
</comment>
<comment type="catalytic activity">
    <reaction evidence="1">
        <text>L-threonylcarbamoyladenylate + adenosine(37) in tRNA = N(6)-L-threonylcarbamoyladenosine(37) in tRNA + AMP + H(+)</text>
        <dbReference type="Rhea" id="RHEA:37059"/>
        <dbReference type="Rhea" id="RHEA-COMP:10162"/>
        <dbReference type="Rhea" id="RHEA-COMP:10163"/>
        <dbReference type="ChEBI" id="CHEBI:15378"/>
        <dbReference type="ChEBI" id="CHEBI:73682"/>
        <dbReference type="ChEBI" id="CHEBI:74411"/>
        <dbReference type="ChEBI" id="CHEBI:74418"/>
        <dbReference type="ChEBI" id="CHEBI:456215"/>
        <dbReference type="EC" id="2.3.1.234"/>
    </reaction>
</comment>
<comment type="cofactor">
    <cofactor evidence="1">
        <name>Fe(2+)</name>
        <dbReference type="ChEBI" id="CHEBI:29033"/>
    </cofactor>
    <text evidence="1">Binds 1 Fe(2+) ion per subunit.</text>
</comment>
<comment type="subcellular location">
    <subcellularLocation>
        <location evidence="1">Cytoplasm</location>
    </subcellularLocation>
</comment>
<comment type="similarity">
    <text evidence="1">Belongs to the KAE1 / TsaD family.</text>
</comment>